<protein>
    <recommendedName>
        <fullName evidence="1">tRNA N6-adenosine threonylcarbamoyltransferase</fullName>
        <ecNumber evidence="1">2.3.1.234</ecNumber>
    </recommendedName>
    <alternativeName>
        <fullName evidence="1">N6-L-threonylcarbamoyladenine synthase</fullName>
        <shortName evidence="1">t(6)A synthase</shortName>
    </alternativeName>
    <alternativeName>
        <fullName evidence="1">t(6)A37 threonylcarbamoyladenosine biosynthesis protein TsaD</fullName>
    </alternativeName>
    <alternativeName>
        <fullName evidence="1">tRNA threonylcarbamoyladenosine biosynthesis protein TsaD</fullName>
    </alternativeName>
</protein>
<reference key="1">
    <citation type="journal article" date="2005" name="Nat. Biotechnol.">
        <title>The complete genome sequence of the meat-borne lactic acid bacterium Lactobacillus sakei 23K.</title>
        <authorList>
            <person name="Chaillou S."/>
            <person name="Champomier-Verges M.-C."/>
            <person name="Cornet M."/>
            <person name="Crutz-Le Coq A.-M."/>
            <person name="Dudez A.-M."/>
            <person name="Martin V."/>
            <person name="Beaufils S."/>
            <person name="Darbon-Rongere E."/>
            <person name="Bossy R."/>
            <person name="Loux V."/>
            <person name="Zagorec M."/>
        </authorList>
    </citation>
    <scope>NUCLEOTIDE SEQUENCE [LARGE SCALE GENOMIC DNA]</scope>
    <source>
        <strain>23K</strain>
    </source>
</reference>
<comment type="function">
    <text evidence="1">Required for the formation of a threonylcarbamoyl group on adenosine at position 37 (t(6)A37) in tRNAs that read codons beginning with adenine. Is involved in the transfer of the threonylcarbamoyl moiety of threonylcarbamoyl-AMP (TC-AMP) to the N6 group of A37, together with TsaE and TsaB. TsaD likely plays a direct catalytic role in this reaction.</text>
</comment>
<comment type="catalytic activity">
    <reaction evidence="1">
        <text>L-threonylcarbamoyladenylate + adenosine(37) in tRNA = N(6)-L-threonylcarbamoyladenosine(37) in tRNA + AMP + H(+)</text>
        <dbReference type="Rhea" id="RHEA:37059"/>
        <dbReference type="Rhea" id="RHEA-COMP:10162"/>
        <dbReference type="Rhea" id="RHEA-COMP:10163"/>
        <dbReference type="ChEBI" id="CHEBI:15378"/>
        <dbReference type="ChEBI" id="CHEBI:73682"/>
        <dbReference type="ChEBI" id="CHEBI:74411"/>
        <dbReference type="ChEBI" id="CHEBI:74418"/>
        <dbReference type="ChEBI" id="CHEBI:456215"/>
        <dbReference type="EC" id="2.3.1.234"/>
    </reaction>
</comment>
<comment type="cofactor">
    <cofactor evidence="1">
        <name>Fe(2+)</name>
        <dbReference type="ChEBI" id="CHEBI:29033"/>
    </cofactor>
    <text evidence="1">Binds 1 Fe(2+) ion per subunit.</text>
</comment>
<comment type="subcellular location">
    <subcellularLocation>
        <location evidence="1">Cytoplasm</location>
    </subcellularLocation>
</comment>
<comment type="similarity">
    <text evidence="1">Belongs to the KAE1 / TsaD family.</text>
</comment>
<organism>
    <name type="scientific">Latilactobacillus sakei subsp. sakei (strain 23K)</name>
    <name type="common">Lactobacillus sakei subsp. sakei</name>
    <dbReference type="NCBI Taxonomy" id="314315"/>
    <lineage>
        <taxon>Bacteria</taxon>
        <taxon>Bacillati</taxon>
        <taxon>Bacillota</taxon>
        <taxon>Bacilli</taxon>
        <taxon>Lactobacillales</taxon>
        <taxon>Lactobacillaceae</taxon>
        <taxon>Latilactobacillus</taxon>
    </lineage>
</organism>
<gene>
    <name evidence="1" type="primary">tsaD</name>
    <name type="synonym">gcp</name>
    <name type="ordered locus">LCA_0351</name>
</gene>
<keyword id="KW-0012">Acyltransferase</keyword>
<keyword id="KW-0963">Cytoplasm</keyword>
<keyword id="KW-0408">Iron</keyword>
<keyword id="KW-0479">Metal-binding</keyword>
<keyword id="KW-1185">Reference proteome</keyword>
<keyword id="KW-0808">Transferase</keyword>
<keyword id="KW-0819">tRNA processing</keyword>
<proteinExistence type="inferred from homology"/>
<feature type="chain" id="PRO_0000303397" description="tRNA N6-adenosine threonylcarbamoyltransferase">
    <location>
        <begin position="1"/>
        <end position="344"/>
    </location>
</feature>
<feature type="binding site" evidence="1">
    <location>
        <position position="116"/>
    </location>
    <ligand>
        <name>Fe cation</name>
        <dbReference type="ChEBI" id="CHEBI:24875"/>
    </ligand>
</feature>
<feature type="binding site" evidence="1">
    <location>
        <position position="120"/>
    </location>
    <ligand>
        <name>Fe cation</name>
        <dbReference type="ChEBI" id="CHEBI:24875"/>
    </ligand>
</feature>
<feature type="binding site" evidence="1">
    <location>
        <begin position="138"/>
        <end position="142"/>
    </location>
    <ligand>
        <name>substrate</name>
    </ligand>
</feature>
<feature type="binding site" evidence="1">
    <location>
        <position position="171"/>
    </location>
    <ligand>
        <name>substrate</name>
    </ligand>
</feature>
<feature type="binding site" evidence="1">
    <location>
        <position position="184"/>
    </location>
    <ligand>
        <name>substrate</name>
    </ligand>
</feature>
<feature type="binding site" evidence="1">
    <location>
        <position position="188"/>
    </location>
    <ligand>
        <name>substrate</name>
    </ligand>
</feature>
<feature type="binding site" evidence="1">
    <location>
        <position position="277"/>
    </location>
    <ligand>
        <name>substrate</name>
    </ligand>
</feature>
<feature type="binding site" evidence="1">
    <location>
        <position position="307"/>
    </location>
    <ligand>
        <name>Fe cation</name>
        <dbReference type="ChEBI" id="CHEBI:24875"/>
    </ligand>
</feature>
<accession>Q38YS5</accession>
<dbReference type="EC" id="2.3.1.234" evidence="1"/>
<dbReference type="EMBL" id="CR936503">
    <property type="protein sequence ID" value="CAI54652.1"/>
    <property type="molecule type" value="Genomic_DNA"/>
</dbReference>
<dbReference type="RefSeq" id="WP_011374060.1">
    <property type="nucleotide sequence ID" value="NC_007576.1"/>
</dbReference>
<dbReference type="SMR" id="Q38YS5"/>
<dbReference type="STRING" id="314315.LCA_0351"/>
<dbReference type="KEGG" id="lsa:LCA_0351"/>
<dbReference type="eggNOG" id="COG0533">
    <property type="taxonomic scope" value="Bacteria"/>
</dbReference>
<dbReference type="HOGENOM" id="CLU_023208_0_2_9"/>
<dbReference type="OrthoDB" id="9806197at2"/>
<dbReference type="Proteomes" id="UP000002707">
    <property type="component" value="Chromosome"/>
</dbReference>
<dbReference type="GO" id="GO:0005737">
    <property type="term" value="C:cytoplasm"/>
    <property type="evidence" value="ECO:0007669"/>
    <property type="project" value="UniProtKB-SubCell"/>
</dbReference>
<dbReference type="GO" id="GO:0005506">
    <property type="term" value="F:iron ion binding"/>
    <property type="evidence" value="ECO:0007669"/>
    <property type="project" value="UniProtKB-UniRule"/>
</dbReference>
<dbReference type="GO" id="GO:0061711">
    <property type="term" value="F:N(6)-L-threonylcarbamoyladenine synthase activity"/>
    <property type="evidence" value="ECO:0007669"/>
    <property type="project" value="UniProtKB-EC"/>
</dbReference>
<dbReference type="GO" id="GO:0002949">
    <property type="term" value="P:tRNA threonylcarbamoyladenosine modification"/>
    <property type="evidence" value="ECO:0007669"/>
    <property type="project" value="UniProtKB-UniRule"/>
</dbReference>
<dbReference type="CDD" id="cd24133">
    <property type="entry name" value="ASKHA_NBD_TsaD_bac"/>
    <property type="match status" value="1"/>
</dbReference>
<dbReference type="FunFam" id="3.30.420.40:FF:000012">
    <property type="entry name" value="tRNA N6-adenosine threonylcarbamoyltransferase"/>
    <property type="match status" value="1"/>
</dbReference>
<dbReference type="FunFam" id="3.30.420.40:FF:000040">
    <property type="entry name" value="tRNA N6-adenosine threonylcarbamoyltransferase"/>
    <property type="match status" value="1"/>
</dbReference>
<dbReference type="Gene3D" id="3.30.420.40">
    <property type="match status" value="2"/>
</dbReference>
<dbReference type="HAMAP" id="MF_01445">
    <property type="entry name" value="TsaD"/>
    <property type="match status" value="1"/>
</dbReference>
<dbReference type="InterPro" id="IPR043129">
    <property type="entry name" value="ATPase_NBD"/>
</dbReference>
<dbReference type="InterPro" id="IPR000905">
    <property type="entry name" value="Gcp-like_dom"/>
</dbReference>
<dbReference type="InterPro" id="IPR017861">
    <property type="entry name" value="KAE1/TsaD"/>
</dbReference>
<dbReference type="InterPro" id="IPR017860">
    <property type="entry name" value="Peptidase_M22_CS"/>
</dbReference>
<dbReference type="InterPro" id="IPR022450">
    <property type="entry name" value="TsaD"/>
</dbReference>
<dbReference type="NCBIfam" id="TIGR00329">
    <property type="entry name" value="gcp_kae1"/>
    <property type="match status" value="1"/>
</dbReference>
<dbReference type="NCBIfam" id="TIGR03723">
    <property type="entry name" value="T6A_TsaD_YgjD"/>
    <property type="match status" value="1"/>
</dbReference>
<dbReference type="PANTHER" id="PTHR11735">
    <property type="entry name" value="TRNA N6-ADENOSINE THREONYLCARBAMOYLTRANSFERASE"/>
    <property type="match status" value="1"/>
</dbReference>
<dbReference type="PANTHER" id="PTHR11735:SF6">
    <property type="entry name" value="TRNA N6-ADENOSINE THREONYLCARBAMOYLTRANSFERASE, MITOCHONDRIAL"/>
    <property type="match status" value="1"/>
</dbReference>
<dbReference type="Pfam" id="PF00814">
    <property type="entry name" value="TsaD"/>
    <property type="match status" value="1"/>
</dbReference>
<dbReference type="PRINTS" id="PR00789">
    <property type="entry name" value="OSIALOPTASE"/>
</dbReference>
<dbReference type="SUPFAM" id="SSF53067">
    <property type="entry name" value="Actin-like ATPase domain"/>
    <property type="match status" value="2"/>
</dbReference>
<dbReference type="PROSITE" id="PS01016">
    <property type="entry name" value="GLYCOPROTEASE"/>
    <property type="match status" value="1"/>
</dbReference>
<evidence type="ECO:0000255" key="1">
    <source>
        <dbReference type="HAMAP-Rule" id="MF_01445"/>
    </source>
</evidence>
<name>TSAD_LATSS</name>
<sequence length="344" mass="36536">MTEKKELILAFESSCDETSVAVIENGQRILSNVIATQIKSHQRFGGVVPEVASRHHVEQITLCTQEALEQAGVTYDDLTAVAVTYGPGLVGALLIGVTAAKAIAYAHHLPLVPVNHMAGHIYAARFVKPLEYPLLALLVSGGHTELVYMPAAGQFEIIGDTRDDAAGEAYDKIGRVLGVPYPAGKEIDRLAHLGQDTFNFPRAMLKEDNLDFSFSGLKSAFINTVHHADQIGETLDQADLAASFQASVVEVLVTKTLRAAQSLKVKQLVVAGGVAANQGLREGLAAGIESAGLDLDLIMPPLRLCGDNGAMIGAAAHIALAQNTLADLDLNAIPSLDFPYQNEL</sequence>